<name>HPCH_SALTI</name>
<keyword id="KW-0058">Aromatic hydrocarbons catabolism</keyword>
<keyword id="KW-0456">Lyase</keyword>
<keyword id="KW-0479">Metal-binding</keyword>
<comment type="function">
    <text evidence="1">Catalyzes the reversible retro-aldol cleavage of 4-hydroxy-2-ketoheptane-1,7-dioate (HKHD) to pyruvate and succinic semialdehyde.</text>
</comment>
<comment type="catalytic activity">
    <reaction evidence="1">
        <text>4-hydroxy-2-oxoheptanedioate = succinate semialdehyde + pyruvate</text>
        <dbReference type="Rhea" id="RHEA:25788"/>
        <dbReference type="ChEBI" id="CHEBI:15361"/>
        <dbReference type="ChEBI" id="CHEBI:57706"/>
        <dbReference type="ChEBI" id="CHEBI:73036"/>
        <dbReference type="EC" id="4.1.2.52"/>
    </reaction>
</comment>
<comment type="cofactor">
    <cofactor evidence="1">
        <name>a divalent metal cation</name>
        <dbReference type="ChEBI" id="CHEBI:60240"/>
    </cofactor>
    <text evidence="1">Binds 1 divalent metal cation per subunit.</text>
</comment>
<comment type="pathway">
    <text evidence="1">Aromatic compound metabolism; 4-hydroxyphenylacetate degradation; pyruvate and succinate semialdehyde from 4-hydroxyphenylacetate: step 7/7.</text>
</comment>
<comment type="subunit">
    <text evidence="1">Homohexamer; trimer of dimers.</text>
</comment>
<comment type="similarity">
    <text evidence="1">Belongs to the HpcH/HpaI aldolase family.</text>
</comment>
<reference key="1">
    <citation type="journal article" date="2001" name="Nature">
        <title>Complete genome sequence of a multiple drug resistant Salmonella enterica serovar Typhi CT18.</title>
        <authorList>
            <person name="Parkhill J."/>
            <person name="Dougan G."/>
            <person name="James K.D."/>
            <person name="Thomson N.R."/>
            <person name="Pickard D."/>
            <person name="Wain J."/>
            <person name="Churcher C.M."/>
            <person name="Mungall K.L."/>
            <person name="Bentley S.D."/>
            <person name="Holden M.T.G."/>
            <person name="Sebaihia M."/>
            <person name="Baker S."/>
            <person name="Basham D."/>
            <person name="Brooks K."/>
            <person name="Chillingworth T."/>
            <person name="Connerton P."/>
            <person name="Cronin A."/>
            <person name="Davis P."/>
            <person name="Davies R.M."/>
            <person name="Dowd L."/>
            <person name="White N."/>
            <person name="Farrar J."/>
            <person name="Feltwell T."/>
            <person name="Hamlin N."/>
            <person name="Haque A."/>
            <person name="Hien T.T."/>
            <person name="Holroyd S."/>
            <person name="Jagels K."/>
            <person name="Krogh A."/>
            <person name="Larsen T.S."/>
            <person name="Leather S."/>
            <person name="Moule S."/>
            <person name="O'Gaora P."/>
            <person name="Parry C."/>
            <person name="Quail M.A."/>
            <person name="Rutherford K.M."/>
            <person name="Simmonds M."/>
            <person name="Skelton J."/>
            <person name="Stevens K."/>
            <person name="Whitehead S."/>
            <person name="Barrell B.G."/>
        </authorList>
    </citation>
    <scope>NUCLEOTIDE SEQUENCE [LARGE SCALE GENOMIC DNA]</scope>
    <source>
        <strain>CT18</strain>
    </source>
</reference>
<reference key="2">
    <citation type="journal article" date="2003" name="J. Bacteriol.">
        <title>Comparative genomics of Salmonella enterica serovar Typhi strains Ty2 and CT18.</title>
        <authorList>
            <person name="Deng W."/>
            <person name="Liou S.-R."/>
            <person name="Plunkett G. III"/>
            <person name="Mayhew G.F."/>
            <person name="Rose D.J."/>
            <person name="Burland V."/>
            <person name="Kodoyianni V."/>
            <person name="Schwartz D.C."/>
            <person name="Blattner F.R."/>
        </authorList>
    </citation>
    <scope>NUCLEOTIDE SEQUENCE [LARGE SCALE GENOMIC DNA]</scope>
    <source>
        <strain>ATCC 700931 / Ty2</strain>
    </source>
</reference>
<proteinExistence type="inferred from homology"/>
<feature type="chain" id="PRO_0000355110" description="4-hydroxy-2-oxo-heptane-1,7-dioate aldolase">
    <location>
        <begin position="1"/>
        <end position="263"/>
    </location>
</feature>
<feature type="active site" description="Proton acceptor" evidence="1">
    <location>
        <position position="45"/>
    </location>
</feature>
<feature type="binding site" evidence="1">
    <location>
        <position position="147"/>
    </location>
    <ligand>
        <name>substrate</name>
    </ligand>
</feature>
<feature type="binding site" evidence="1">
    <location>
        <position position="149"/>
    </location>
    <ligand>
        <name>a divalent metal cation</name>
        <dbReference type="ChEBI" id="CHEBI:60240"/>
    </ligand>
</feature>
<feature type="binding site" evidence="1">
    <location>
        <position position="174"/>
    </location>
    <ligand>
        <name>substrate</name>
    </ligand>
</feature>
<feature type="binding site" evidence="1">
    <location>
        <position position="175"/>
    </location>
    <ligand>
        <name>a divalent metal cation</name>
        <dbReference type="ChEBI" id="CHEBI:60240"/>
    </ligand>
</feature>
<feature type="binding site" evidence="1">
    <location>
        <position position="175"/>
    </location>
    <ligand>
        <name>substrate</name>
    </ligand>
</feature>
<feature type="site" description="Transition state stabilizer" evidence="1">
    <location>
        <position position="70"/>
    </location>
</feature>
<feature type="site" description="Increases basicity of active site His" evidence="1">
    <location>
        <position position="84"/>
    </location>
</feature>
<organism>
    <name type="scientific">Salmonella typhi</name>
    <dbReference type="NCBI Taxonomy" id="90370"/>
    <lineage>
        <taxon>Bacteria</taxon>
        <taxon>Pseudomonadati</taxon>
        <taxon>Pseudomonadota</taxon>
        <taxon>Gammaproteobacteria</taxon>
        <taxon>Enterobacterales</taxon>
        <taxon>Enterobacteriaceae</taxon>
        <taxon>Salmonella</taxon>
    </lineage>
</organism>
<accession>Q8Z7P9</accession>
<accession>Q7C982</accession>
<sequence length="263" mass="27787">MKNAFKDALKAGRPQIGLWLGLANSYSAELLAGAGFDWLLIDGEHAPNNVQTVLTQLQAIAPYPSQPVVRPSWNDPVQIKQLLDVGAQTLLIPMVQNADEARNAVAATRYPPAGIRGVGSALARASRWNRIPDYLHQANDAMCVLVQIETREAMSNLASILDVDGIDGVFIGPADLSADMGFAGNPQHPEVQAAIENAIVQIRAAGKAPGILMANEALAKRYLELGALFVAVGVDTTLLARGAEALAARFGAEKKLSGASGVY</sequence>
<dbReference type="EC" id="4.1.2.52" evidence="1"/>
<dbReference type="EMBL" id="AE014613">
    <property type="protein sequence ID" value="AAO69435.1"/>
    <property type="molecule type" value="Genomic_DNA"/>
</dbReference>
<dbReference type="EMBL" id="AL513382">
    <property type="protein sequence ID" value="CAD08232.1"/>
    <property type="molecule type" value="Genomic_DNA"/>
</dbReference>
<dbReference type="RefSeq" id="NP_455602.1">
    <property type="nucleotide sequence ID" value="NC_003198.1"/>
</dbReference>
<dbReference type="RefSeq" id="WP_000785061.1">
    <property type="nucleotide sequence ID" value="NZ_WSUR01000018.1"/>
</dbReference>
<dbReference type="SMR" id="Q8Z7P9"/>
<dbReference type="STRING" id="220341.gene:17585111"/>
<dbReference type="KEGG" id="stt:t1813"/>
<dbReference type="KEGG" id="sty:STY1140"/>
<dbReference type="PATRIC" id="fig|220341.7.peg.1141"/>
<dbReference type="eggNOG" id="COG3836">
    <property type="taxonomic scope" value="Bacteria"/>
</dbReference>
<dbReference type="HOGENOM" id="CLU_059964_1_0_6"/>
<dbReference type="OMA" id="WNRVDDY"/>
<dbReference type="OrthoDB" id="86160at2"/>
<dbReference type="UniPathway" id="UPA00208">
    <property type="reaction ID" value="UER00422"/>
</dbReference>
<dbReference type="Proteomes" id="UP000000541">
    <property type="component" value="Chromosome"/>
</dbReference>
<dbReference type="Proteomes" id="UP000002670">
    <property type="component" value="Chromosome"/>
</dbReference>
<dbReference type="GO" id="GO:0005737">
    <property type="term" value="C:cytoplasm"/>
    <property type="evidence" value="ECO:0007669"/>
    <property type="project" value="TreeGrafter"/>
</dbReference>
<dbReference type="GO" id="GO:0043863">
    <property type="term" value="F:4-hydroxy-2-ketopimelate aldolase activity"/>
    <property type="evidence" value="ECO:0007669"/>
    <property type="project" value="RHEA"/>
</dbReference>
<dbReference type="GO" id="GO:0046872">
    <property type="term" value="F:metal ion binding"/>
    <property type="evidence" value="ECO:0007669"/>
    <property type="project" value="UniProtKB-UniRule"/>
</dbReference>
<dbReference type="GO" id="GO:1901023">
    <property type="term" value="P:4-hydroxyphenylacetate catabolic process"/>
    <property type="evidence" value="ECO:0007669"/>
    <property type="project" value="UniProtKB-UniRule"/>
</dbReference>
<dbReference type="GO" id="GO:0010124">
    <property type="term" value="P:phenylacetate catabolic process"/>
    <property type="evidence" value="ECO:0007669"/>
    <property type="project" value="InterPro"/>
</dbReference>
<dbReference type="FunFam" id="3.20.20.60:FF:000004">
    <property type="entry name" value="5-keto-4-deoxy-D-glucarate aldolase"/>
    <property type="match status" value="1"/>
</dbReference>
<dbReference type="Gene3D" id="3.20.20.60">
    <property type="entry name" value="Phosphoenolpyruvate-binding domains"/>
    <property type="match status" value="1"/>
</dbReference>
<dbReference type="HAMAP" id="MF_01292">
    <property type="entry name" value="HKHD_aldolase"/>
    <property type="match status" value="1"/>
</dbReference>
<dbReference type="InterPro" id="IPR005000">
    <property type="entry name" value="Aldolase/citrate-lyase_domain"/>
</dbReference>
<dbReference type="InterPro" id="IPR023701">
    <property type="entry name" value="HKHD_aldolase_ent"/>
</dbReference>
<dbReference type="InterPro" id="IPR012689">
    <property type="entry name" value="HpaI"/>
</dbReference>
<dbReference type="InterPro" id="IPR050251">
    <property type="entry name" value="HpcH-HpaI_aldolase"/>
</dbReference>
<dbReference type="InterPro" id="IPR015813">
    <property type="entry name" value="Pyrv/PenolPyrv_kinase-like_dom"/>
</dbReference>
<dbReference type="InterPro" id="IPR040442">
    <property type="entry name" value="Pyrv_kinase-like_dom_sf"/>
</dbReference>
<dbReference type="NCBIfam" id="TIGR02311">
    <property type="entry name" value="HpaI"/>
    <property type="match status" value="1"/>
</dbReference>
<dbReference type="PANTHER" id="PTHR30502">
    <property type="entry name" value="2-KETO-3-DEOXY-L-RHAMNONATE ALDOLASE"/>
    <property type="match status" value="1"/>
</dbReference>
<dbReference type="PANTHER" id="PTHR30502:SF0">
    <property type="entry name" value="PHOSPHOENOLPYRUVATE CARBOXYLASE FAMILY PROTEIN"/>
    <property type="match status" value="1"/>
</dbReference>
<dbReference type="Pfam" id="PF03328">
    <property type="entry name" value="HpcH_HpaI"/>
    <property type="match status" value="1"/>
</dbReference>
<dbReference type="SUPFAM" id="SSF51621">
    <property type="entry name" value="Phosphoenolpyruvate/pyruvate domain"/>
    <property type="match status" value="1"/>
</dbReference>
<protein>
    <recommendedName>
        <fullName evidence="1">4-hydroxy-2-oxo-heptane-1,7-dioate aldolase</fullName>
        <ecNumber evidence="1">4.1.2.52</ecNumber>
    </recommendedName>
    <alternativeName>
        <fullName evidence="1">2,4-dihydroxyhept-2-ene-1,7-dioic acid aldolase</fullName>
        <shortName evidence="1">HHED aldolase</shortName>
    </alternativeName>
    <alternativeName>
        <fullName evidence="1">4-hydroxy-2-ketoheptane-1,7-dioate aldolase</fullName>
        <shortName evidence="1">HKHD aldolase</shortName>
    </alternativeName>
</protein>
<gene>
    <name evidence="1" type="primary">hpcH</name>
    <name evidence="1" type="synonym">hpaI</name>
    <name type="ordered locus">STY1140</name>
    <name type="ordered locus">t1813</name>
</gene>
<evidence type="ECO:0000255" key="1">
    <source>
        <dbReference type="HAMAP-Rule" id="MF_01292"/>
    </source>
</evidence>